<gene>
    <name type="primary">hspG6</name>
    <name type="ORF">DDB_G0276949</name>
</gene>
<sequence>MATIFDILNTLNNNNNNNNFENCKRQCPINKSNKTIIDKLPPMDVTMTNDKLIIETELAGISKDHIEIDIKDSILTIQGEKKKNLNKQQQQLVIEKSTSSSTLDSKEDEPSIEEFEDDIKPKSKSDNTTVSTTTTATTKENKEDENKTKSTDKKFISERSFGNFKRYLDLTKILYQLDLNSINTQFENGLLTITINKKLHYSNTIKININ</sequence>
<accession>Q8MMN1</accession>
<accession>Q550F2</accession>
<evidence type="ECO:0000255" key="1">
    <source>
        <dbReference type="PROSITE-ProRule" id="PRU00285"/>
    </source>
</evidence>
<evidence type="ECO:0000256" key="2">
    <source>
        <dbReference type="SAM" id="MobiDB-lite"/>
    </source>
</evidence>
<protein>
    <recommendedName>
        <fullName>Small heat shock protein hspG6</fullName>
    </recommendedName>
</protein>
<reference key="1">
    <citation type="journal article" date="2002" name="Nature">
        <title>Sequence and analysis of chromosome 2 of Dictyostelium discoideum.</title>
        <authorList>
            <person name="Gloeckner G."/>
            <person name="Eichinger L."/>
            <person name="Szafranski K."/>
            <person name="Pachebat J.A."/>
            <person name="Bankier A.T."/>
            <person name="Dear P.H."/>
            <person name="Lehmann R."/>
            <person name="Baumgart C."/>
            <person name="Parra G."/>
            <person name="Abril J.F."/>
            <person name="Guigo R."/>
            <person name="Kumpf K."/>
            <person name="Tunggal B."/>
            <person name="Cox E.C."/>
            <person name="Quail M.A."/>
            <person name="Platzer M."/>
            <person name="Rosenthal A."/>
            <person name="Noegel A.A."/>
        </authorList>
    </citation>
    <scope>NUCLEOTIDE SEQUENCE [LARGE SCALE GENOMIC DNA]</scope>
    <source>
        <strain>AX4</strain>
    </source>
</reference>
<reference key="2">
    <citation type="journal article" date="2005" name="Nature">
        <title>The genome of the social amoeba Dictyostelium discoideum.</title>
        <authorList>
            <person name="Eichinger L."/>
            <person name="Pachebat J.A."/>
            <person name="Gloeckner G."/>
            <person name="Rajandream M.A."/>
            <person name="Sucgang R."/>
            <person name="Berriman M."/>
            <person name="Song J."/>
            <person name="Olsen R."/>
            <person name="Szafranski K."/>
            <person name="Xu Q."/>
            <person name="Tunggal B."/>
            <person name="Kummerfeld S."/>
            <person name="Madera M."/>
            <person name="Konfortov B.A."/>
            <person name="Rivero F."/>
            <person name="Bankier A.T."/>
            <person name="Lehmann R."/>
            <person name="Hamlin N."/>
            <person name="Davies R."/>
            <person name="Gaudet P."/>
            <person name="Fey P."/>
            <person name="Pilcher K."/>
            <person name="Chen G."/>
            <person name="Saunders D."/>
            <person name="Sodergren E.J."/>
            <person name="Davis P."/>
            <person name="Kerhornou A."/>
            <person name="Nie X."/>
            <person name="Hall N."/>
            <person name="Anjard C."/>
            <person name="Hemphill L."/>
            <person name="Bason N."/>
            <person name="Farbrother P."/>
            <person name="Desany B."/>
            <person name="Just E."/>
            <person name="Morio T."/>
            <person name="Rost R."/>
            <person name="Churcher C.M."/>
            <person name="Cooper J."/>
            <person name="Haydock S."/>
            <person name="van Driessche N."/>
            <person name="Cronin A."/>
            <person name="Goodhead I."/>
            <person name="Muzny D.M."/>
            <person name="Mourier T."/>
            <person name="Pain A."/>
            <person name="Lu M."/>
            <person name="Harper D."/>
            <person name="Lindsay R."/>
            <person name="Hauser H."/>
            <person name="James K.D."/>
            <person name="Quiles M."/>
            <person name="Madan Babu M."/>
            <person name="Saito T."/>
            <person name="Buchrieser C."/>
            <person name="Wardroper A."/>
            <person name="Felder M."/>
            <person name="Thangavelu M."/>
            <person name="Johnson D."/>
            <person name="Knights A."/>
            <person name="Loulseged H."/>
            <person name="Mungall K.L."/>
            <person name="Oliver K."/>
            <person name="Price C."/>
            <person name="Quail M.A."/>
            <person name="Urushihara H."/>
            <person name="Hernandez J."/>
            <person name="Rabbinowitsch E."/>
            <person name="Steffen D."/>
            <person name="Sanders M."/>
            <person name="Ma J."/>
            <person name="Kohara Y."/>
            <person name="Sharp S."/>
            <person name="Simmonds M.N."/>
            <person name="Spiegler S."/>
            <person name="Tivey A."/>
            <person name="Sugano S."/>
            <person name="White B."/>
            <person name="Walker D."/>
            <person name="Woodward J.R."/>
            <person name="Winckler T."/>
            <person name="Tanaka Y."/>
            <person name="Shaulsky G."/>
            <person name="Schleicher M."/>
            <person name="Weinstock G.M."/>
            <person name="Rosenthal A."/>
            <person name="Cox E.C."/>
            <person name="Chisholm R.L."/>
            <person name="Gibbs R.A."/>
            <person name="Loomis W.F."/>
            <person name="Platzer M."/>
            <person name="Kay R.R."/>
            <person name="Williams J.G."/>
            <person name="Dear P.H."/>
            <person name="Noegel A.A."/>
            <person name="Barrell B.G."/>
            <person name="Kuspa A."/>
        </authorList>
    </citation>
    <scope>NUCLEOTIDE SEQUENCE [LARGE SCALE GENOMIC DNA]</scope>
    <source>
        <strain>AX4</strain>
    </source>
</reference>
<dbReference type="EMBL" id="AAFI02000019">
    <property type="protein sequence ID" value="EAL68976.1"/>
    <property type="molecule type" value="Genomic_DNA"/>
</dbReference>
<dbReference type="RefSeq" id="XP_642980.1">
    <property type="nucleotide sequence ID" value="XM_637888.1"/>
</dbReference>
<dbReference type="SMR" id="Q8MMN1"/>
<dbReference type="STRING" id="44689.Q8MMN1"/>
<dbReference type="PaxDb" id="44689-DDB0232125"/>
<dbReference type="EnsemblProtists" id="EAL68976">
    <property type="protein sequence ID" value="EAL68976"/>
    <property type="gene ID" value="DDB_G0276949"/>
</dbReference>
<dbReference type="GeneID" id="8620852"/>
<dbReference type="KEGG" id="ddi:DDB_G0276949"/>
<dbReference type="dictyBase" id="DDB_G0276949">
    <property type="gene designation" value="hspG6"/>
</dbReference>
<dbReference type="VEuPathDB" id="AmoebaDB:DDB_G0276949"/>
<dbReference type="eggNOG" id="KOG0710">
    <property type="taxonomic scope" value="Eukaryota"/>
</dbReference>
<dbReference type="HOGENOM" id="CLU_1328489_0_0_1"/>
<dbReference type="InParanoid" id="Q8MMN1"/>
<dbReference type="OMA" id="VINHTEI"/>
<dbReference type="PhylomeDB" id="Q8MMN1"/>
<dbReference type="PRO" id="PR:Q8MMN1"/>
<dbReference type="Proteomes" id="UP000002195">
    <property type="component" value="Chromosome 2"/>
</dbReference>
<dbReference type="CDD" id="cd06464">
    <property type="entry name" value="ACD_sHsps-like"/>
    <property type="match status" value="1"/>
</dbReference>
<dbReference type="Gene3D" id="2.60.40.790">
    <property type="match status" value="2"/>
</dbReference>
<dbReference type="InterPro" id="IPR002068">
    <property type="entry name" value="A-crystallin/Hsp20_dom"/>
</dbReference>
<dbReference type="InterPro" id="IPR008978">
    <property type="entry name" value="HSP20-like_chaperone"/>
</dbReference>
<dbReference type="InterPro" id="IPR051779">
    <property type="entry name" value="HspG1-11-like"/>
</dbReference>
<dbReference type="PANTHER" id="PTHR46827">
    <property type="entry name" value="HEAT SHOCK PROTEIN DDB_G0288861-RELATED"/>
    <property type="match status" value="1"/>
</dbReference>
<dbReference type="PANTHER" id="PTHR46827:SF1">
    <property type="entry name" value="HEAT SHOCK PROTEIN DDB_G0288861-RELATED"/>
    <property type="match status" value="1"/>
</dbReference>
<dbReference type="Pfam" id="PF00011">
    <property type="entry name" value="HSP20"/>
    <property type="match status" value="1"/>
</dbReference>
<dbReference type="SUPFAM" id="SSF49764">
    <property type="entry name" value="HSP20-like chaperones"/>
    <property type="match status" value="1"/>
</dbReference>
<dbReference type="PROSITE" id="PS01031">
    <property type="entry name" value="SHSP"/>
    <property type="match status" value="1"/>
</dbReference>
<keyword id="KW-1185">Reference proteome</keyword>
<keyword id="KW-0346">Stress response</keyword>
<feature type="chain" id="PRO_0000363898" description="Small heat shock protein hspG6">
    <location>
        <begin position="1"/>
        <end position="210"/>
    </location>
</feature>
<feature type="domain" description="sHSP" evidence="1">
    <location>
        <begin position="34"/>
        <end position="210"/>
    </location>
</feature>
<feature type="region of interest" description="Disordered" evidence="2">
    <location>
        <begin position="93"/>
        <end position="151"/>
    </location>
</feature>
<feature type="compositionally biased region" description="Low complexity" evidence="2">
    <location>
        <begin position="126"/>
        <end position="138"/>
    </location>
</feature>
<feature type="compositionally biased region" description="Basic and acidic residues" evidence="2">
    <location>
        <begin position="139"/>
        <end position="151"/>
    </location>
</feature>
<organism>
    <name type="scientific">Dictyostelium discoideum</name>
    <name type="common">Social amoeba</name>
    <dbReference type="NCBI Taxonomy" id="44689"/>
    <lineage>
        <taxon>Eukaryota</taxon>
        <taxon>Amoebozoa</taxon>
        <taxon>Evosea</taxon>
        <taxon>Eumycetozoa</taxon>
        <taxon>Dictyostelia</taxon>
        <taxon>Dictyosteliales</taxon>
        <taxon>Dictyosteliaceae</taxon>
        <taxon>Dictyostelium</taxon>
    </lineage>
</organism>
<proteinExistence type="inferred from homology"/>
<comment type="similarity">
    <text evidence="1">Belongs to the small heat shock protein (HSP20) family.</text>
</comment>
<name>HSPG6_DICDI</name>